<name>RS16A_CANAL</name>
<sequence>MSTQSVQTFGKKKTATAVAHVKAGKGLIKINGSPITLVQPEILRFKVYEPLTLVGLDKFQGIDIRVKVTGGGHVSQVYAIRQAIAKGLVAYHQKYVDEASKNELKKIFASYDKTLLVADSRRMEPKKFGGRGARARFQKSYR</sequence>
<reference key="1">
    <citation type="journal article" date="2004" name="Proc. Natl. Acad. Sci. U.S.A.">
        <title>The diploid genome sequence of Candida albicans.</title>
        <authorList>
            <person name="Jones T."/>
            <person name="Federspiel N.A."/>
            <person name="Chibana H."/>
            <person name="Dungan J."/>
            <person name="Kalman S."/>
            <person name="Magee B.B."/>
            <person name="Newport G."/>
            <person name="Thorstenson Y.R."/>
            <person name="Agabian N."/>
            <person name="Magee P.T."/>
            <person name="Davis R.W."/>
            <person name="Scherer S."/>
        </authorList>
    </citation>
    <scope>NUCLEOTIDE SEQUENCE [LARGE SCALE GENOMIC DNA]</scope>
    <source>
        <strain>SC5314 / ATCC MYA-2876</strain>
    </source>
</reference>
<reference key="2">
    <citation type="journal article" date="2007" name="Genome Biol.">
        <title>Assembly of the Candida albicans genome into sixteen supercontigs aligned on the eight chromosomes.</title>
        <authorList>
            <person name="van het Hoog M."/>
            <person name="Rast T.J."/>
            <person name="Martchenko M."/>
            <person name="Grindle S."/>
            <person name="Dignard D."/>
            <person name="Hogues H."/>
            <person name="Cuomo C."/>
            <person name="Berriman M."/>
            <person name="Scherer S."/>
            <person name="Magee B.B."/>
            <person name="Whiteway M."/>
            <person name="Chibana H."/>
            <person name="Nantel A."/>
            <person name="Magee P.T."/>
        </authorList>
    </citation>
    <scope>GENOME REANNOTATION</scope>
    <source>
        <strain>SC5314 / ATCC MYA-2876</strain>
    </source>
</reference>
<reference key="3">
    <citation type="journal article" date="2013" name="Genome Biol.">
        <title>Assembly of a phased diploid Candida albicans genome facilitates allele-specific measurements and provides a simple model for repeat and indel structure.</title>
        <authorList>
            <person name="Muzzey D."/>
            <person name="Schwartz K."/>
            <person name="Weissman J.S."/>
            <person name="Sherlock G."/>
        </authorList>
    </citation>
    <scope>NUCLEOTIDE SEQUENCE [LARGE SCALE GENOMIC DNA]</scope>
    <scope>GENOME REANNOTATION</scope>
    <source>
        <strain>SC5314 / ATCC MYA-2876</strain>
    </source>
</reference>
<reference evidence="5 6 7" key="4">
    <citation type="journal article" date="2022" name="Sci. Adv.">
        <title>E-site drug specificity of the human pathogen Candida albicans ribosome.</title>
        <authorList>
            <person name="Zgadzay Y."/>
            <person name="Kolosova O."/>
            <person name="Stetsenko A."/>
            <person name="Wu C."/>
            <person name="Bruchlen D."/>
            <person name="Usachev K."/>
            <person name="Validov S."/>
            <person name="Jenner L."/>
            <person name="Rogachev A."/>
            <person name="Yusupova G."/>
            <person name="Sachs M.S."/>
            <person name="Guskov A."/>
            <person name="Yusupov M."/>
        </authorList>
    </citation>
    <scope>STRUCTURE BY ELECTRON MICROSCOPY (2.32 ANGSTROMS) OF THE 80S RIBOSOME</scope>
    <scope>SUBUNIT</scope>
</reference>
<organism>
    <name type="scientific">Candida albicans (strain SC5314 / ATCC MYA-2876)</name>
    <name type="common">Yeast</name>
    <dbReference type="NCBI Taxonomy" id="237561"/>
    <lineage>
        <taxon>Eukaryota</taxon>
        <taxon>Fungi</taxon>
        <taxon>Dikarya</taxon>
        <taxon>Ascomycota</taxon>
        <taxon>Saccharomycotina</taxon>
        <taxon>Pichiomycetes</taxon>
        <taxon>Debaryomycetaceae</taxon>
        <taxon>Candida/Lodderomyces clade</taxon>
        <taxon>Candida</taxon>
    </lineage>
</organism>
<comment type="function">
    <text evidence="4">Component of the ribosome, a large ribonucleoprotein complex responsible for the synthesis of proteins in the cell. The small ribosomal subunit (SSU) binds messenger RNAs (mRNAs) and translates the encoded message by selecting cognate aminoacyl-transfer RNA (tRNA) molecules. The large subunit (LSU) contains the ribosomal catalytic site termed the peptidyl transferase center (PTC), which catalyzes the formation of peptide bonds, thereby polymerizing the amino acids delivered by tRNAs into a polypeptide chain. The nascent polypeptides leave the ribosome through a tunnel in the LSU and interact with protein factors that function in enzymatic processing, targeting, and the membrane insertion of nascent chains at the exit of the ribosomal tunnel.</text>
</comment>
<comment type="subunit">
    <text evidence="1">Component of the small ribosomal subunit (PubMed:35613268). Mature ribosomes consist of a small (40S) and a large (60S) subunit (PubMed:35613268). The 40S subunit contains about 32 different proteins and 1 molecule of RNA (18S) (PubMed:35613268). The 60S subunit contains 45 different proteins and 3 molecules of RNA (25S, 5.8S and 5S) (PubMed:35613268).</text>
</comment>
<comment type="subcellular location">
    <subcellularLocation>
        <location evidence="4">Cytoplasm</location>
    </subcellularLocation>
</comment>
<comment type="similarity">
    <text evidence="3">Belongs to the universal ribosomal protein uS9 family.</text>
</comment>
<feature type="chain" id="PRO_0000456554" description="Small ribosomal subunit protein uS9">
    <location>
        <begin position="1"/>
        <end position="142"/>
    </location>
</feature>
<evidence type="ECO:0000269" key="1">
    <source>
    </source>
</evidence>
<evidence type="ECO:0000303" key="2">
    <source>
    </source>
</evidence>
<evidence type="ECO:0000305" key="3"/>
<evidence type="ECO:0000305" key="4">
    <source>
    </source>
</evidence>
<evidence type="ECO:0007744" key="5">
    <source>
        <dbReference type="PDB" id="7PZY"/>
    </source>
</evidence>
<evidence type="ECO:0007744" key="6">
    <source>
        <dbReference type="PDB" id="7Q0F"/>
    </source>
</evidence>
<evidence type="ECO:0007744" key="7">
    <source>
        <dbReference type="PDB" id="7Q0P"/>
    </source>
</evidence>
<accession>A0A1D8PCW6</accession>
<gene>
    <name type="primary">RPS16A</name>
    <name type="ORF">CAALFM_C103030WA</name>
</gene>
<proteinExistence type="evidence at protein level"/>
<protein>
    <recommendedName>
        <fullName evidence="2">Small ribosomal subunit protein uS9</fullName>
    </recommendedName>
    <alternativeName>
        <fullName>40S ribosomal protein S16A</fullName>
    </alternativeName>
</protein>
<dbReference type="EMBL" id="CP017623">
    <property type="protein sequence ID" value="AOW25984.1"/>
    <property type="molecule type" value="Genomic_DNA"/>
</dbReference>
<dbReference type="RefSeq" id="XP_019330621.1">
    <property type="nucleotide sequence ID" value="XM_019475076.1"/>
</dbReference>
<dbReference type="PDB" id="7PZY">
    <property type="method" value="EM"/>
    <property type="resolution" value="2.32 A"/>
    <property type="chains" value="R=1-142"/>
</dbReference>
<dbReference type="PDB" id="7Q08">
    <property type="method" value="EM"/>
    <property type="resolution" value="2.56 A"/>
    <property type="chains" value="R=1-142"/>
</dbReference>
<dbReference type="PDB" id="7Q0F">
    <property type="method" value="EM"/>
    <property type="resolution" value="2.64 A"/>
    <property type="chains" value="R=1-142"/>
</dbReference>
<dbReference type="PDB" id="7Q0P">
    <property type="method" value="EM"/>
    <property type="resolution" value="2.77 A"/>
    <property type="chains" value="R=1-142"/>
</dbReference>
<dbReference type="PDB" id="7Q0R">
    <property type="method" value="EM"/>
    <property type="resolution" value="2.67 A"/>
    <property type="chains" value="R=1-142"/>
</dbReference>
<dbReference type="PDBsum" id="7PZY"/>
<dbReference type="PDBsum" id="7Q08"/>
<dbReference type="PDBsum" id="7Q0F"/>
<dbReference type="PDBsum" id="7Q0P"/>
<dbReference type="PDBsum" id="7Q0R"/>
<dbReference type="EMDB" id="EMD-13737"/>
<dbReference type="EMDB" id="EMD-13741"/>
<dbReference type="EMDB" id="EMD-13744"/>
<dbReference type="EMDB" id="EMD-13749"/>
<dbReference type="EMDB" id="EMD-13750"/>
<dbReference type="SMR" id="A0A1D8PCW6"/>
<dbReference type="FunCoup" id="A0A1D8PCW6">
    <property type="interactions" value="846"/>
</dbReference>
<dbReference type="STRING" id="237561.A0A1D8PCW6"/>
<dbReference type="EnsemblFungi" id="C1_03030W_A-T">
    <property type="protein sequence ID" value="C1_03030W_A-T-p1"/>
    <property type="gene ID" value="C1_03030W_A"/>
</dbReference>
<dbReference type="GeneID" id="30514974"/>
<dbReference type="KEGG" id="cal:CAALFM_C103030WA"/>
<dbReference type="CGD" id="CAL0000175363">
    <property type="gene designation" value="RPS16A"/>
</dbReference>
<dbReference type="VEuPathDB" id="FungiDB:C1_03030W_A"/>
<dbReference type="eggNOG" id="KOG1753">
    <property type="taxonomic scope" value="Eukaryota"/>
</dbReference>
<dbReference type="InParanoid" id="A0A1D8PCW6"/>
<dbReference type="OMA" id="WPIEMAR"/>
<dbReference type="OrthoDB" id="426865at2759"/>
<dbReference type="Proteomes" id="UP000000559">
    <property type="component" value="Chromosome 1"/>
</dbReference>
<dbReference type="GO" id="GO:0022627">
    <property type="term" value="C:cytosolic small ribosomal subunit"/>
    <property type="evidence" value="ECO:0000318"/>
    <property type="project" value="GO_Central"/>
</dbReference>
<dbReference type="GO" id="GO:0003723">
    <property type="term" value="F:RNA binding"/>
    <property type="evidence" value="ECO:0000318"/>
    <property type="project" value="GO_Central"/>
</dbReference>
<dbReference type="GO" id="GO:0003735">
    <property type="term" value="F:structural constituent of ribosome"/>
    <property type="evidence" value="ECO:0000318"/>
    <property type="project" value="GO_Central"/>
</dbReference>
<dbReference type="GO" id="GO:0000462">
    <property type="term" value="P:maturation of SSU-rRNA from tricistronic rRNA transcript (SSU-rRNA, 5.8S rRNA, LSU-rRNA)"/>
    <property type="evidence" value="ECO:0000318"/>
    <property type="project" value="GO_Central"/>
</dbReference>
<dbReference type="GO" id="GO:0006412">
    <property type="term" value="P:translation"/>
    <property type="evidence" value="ECO:0007669"/>
    <property type="project" value="InterPro"/>
</dbReference>
<dbReference type="FunFam" id="3.30.230.10:FF:000007">
    <property type="entry name" value="40S ribosomal protein S16"/>
    <property type="match status" value="1"/>
</dbReference>
<dbReference type="Gene3D" id="3.30.230.10">
    <property type="match status" value="1"/>
</dbReference>
<dbReference type="InterPro" id="IPR020568">
    <property type="entry name" value="Ribosomal_Su5_D2-typ_SF"/>
</dbReference>
<dbReference type="InterPro" id="IPR000754">
    <property type="entry name" value="Ribosomal_uS9"/>
</dbReference>
<dbReference type="InterPro" id="IPR020574">
    <property type="entry name" value="Ribosomal_uS9_CS"/>
</dbReference>
<dbReference type="InterPro" id="IPR014721">
    <property type="entry name" value="Ribsml_uS5_D2-typ_fold_subgr"/>
</dbReference>
<dbReference type="NCBIfam" id="NF001749">
    <property type="entry name" value="PRK00474.1"/>
    <property type="match status" value="1"/>
</dbReference>
<dbReference type="PANTHER" id="PTHR21569:SF16">
    <property type="entry name" value="RIBOSOMAL PROTEIN S16"/>
    <property type="match status" value="1"/>
</dbReference>
<dbReference type="PANTHER" id="PTHR21569">
    <property type="entry name" value="RIBOSOMAL PROTEIN S9"/>
    <property type="match status" value="1"/>
</dbReference>
<dbReference type="Pfam" id="PF00380">
    <property type="entry name" value="Ribosomal_S9"/>
    <property type="match status" value="1"/>
</dbReference>
<dbReference type="SUPFAM" id="SSF54211">
    <property type="entry name" value="Ribosomal protein S5 domain 2-like"/>
    <property type="match status" value="1"/>
</dbReference>
<dbReference type="PROSITE" id="PS00360">
    <property type="entry name" value="RIBOSOMAL_S9"/>
    <property type="match status" value="1"/>
</dbReference>
<keyword id="KW-0002">3D-structure</keyword>
<keyword id="KW-0963">Cytoplasm</keyword>
<keyword id="KW-1185">Reference proteome</keyword>
<keyword id="KW-0687">Ribonucleoprotein</keyword>
<keyword id="KW-0689">Ribosomal protein</keyword>